<comment type="function">
    <text evidence="2">Component of the ubiquinol-cytochrome c reductase complex (complex III or cytochrome b-c1 complex) that is part of the mitochondrial respiratory chain. The b-c1 complex mediates electron transfer from ubiquinol to cytochrome c. Contributes to the generation of a proton gradient across the mitochondrial membrane that is then used for ATP synthesis.</text>
</comment>
<comment type="cofactor">
    <cofactor evidence="2">
        <name>heme b</name>
        <dbReference type="ChEBI" id="CHEBI:60344"/>
    </cofactor>
    <text evidence="2">Binds 2 heme b groups non-covalently.</text>
</comment>
<comment type="subunit">
    <text evidence="2">The cytochrome bc1 complex contains 11 subunits: 3 respiratory subunits (MT-CYB, CYC1 and UQCRFS1), 2 core proteins (UQCRC1 and UQCRC2) and 6 low-molecular weight proteins (UQCRH/QCR6, UQCRB/QCR7, UQCRQ/QCR8, UQCR10/QCR9, UQCR11/QCR10 and a cleavage product of UQCRFS1). This cytochrome bc1 complex then forms a dimer.</text>
</comment>
<comment type="subcellular location">
    <subcellularLocation>
        <location evidence="2">Mitochondrion inner membrane</location>
        <topology evidence="2">Multi-pass membrane protein</topology>
    </subcellularLocation>
</comment>
<comment type="miscellaneous">
    <text evidence="1">Heme 1 (or BL or b562) is low-potential and absorbs at about 562 nm, and heme 2 (or BH or b566) is high-potential and absorbs at about 566 nm.</text>
</comment>
<comment type="similarity">
    <text evidence="3 4">Belongs to the cytochrome b family.</text>
</comment>
<comment type="caution">
    <text evidence="2">The full-length protein contains only eight transmembrane helices, not nine as predicted by bioinformatics tools.</text>
</comment>
<organism>
    <name type="scientific">Orcaella brevirostris</name>
    <name type="common">Irrawaddy dolphin</name>
    <dbReference type="NCBI Taxonomy" id="48747"/>
    <lineage>
        <taxon>Eukaryota</taxon>
        <taxon>Metazoa</taxon>
        <taxon>Chordata</taxon>
        <taxon>Craniata</taxon>
        <taxon>Vertebrata</taxon>
        <taxon>Euteleostomi</taxon>
        <taxon>Mammalia</taxon>
        <taxon>Eutheria</taxon>
        <taxon>Laurasiatheria</taxon>
        <taxon>Artiodactyla</taxon>
        <taxon>Whippomorpha</taxon>
        <taxon>Cetacea</taxon>
        <taxon>Odontoceti</taxon>
        <taxon>Delphinidae</taxon>
        <taxon>Orcaella</taxon>
    </lineage>
</organism>
<evidence type="ECO:0000250" key="1"/>
<evidence type="ECO:0000250" key="2">
    <source>
        <dbReference type="UniProtKB" id="P00157"/>
    </source>
</evidence>
<evidence type="ECO:0000255" key="3">
    <source>
        <dbReference type="PROSITE-ProRule" id="PRU00967"/>
    </source>
</evidence>
<evidence type="ECO:0000255" key="4">
    <source>
        <dbReference type="PROSITE-ProRule" id="PRU00968"/>
    </source>
</evidence>
<proteinExistence type="inferred from homology"/>
<geneLocation type="mitochondrion"/>
<dbReference type="EMBL" id="AF084062">
    <property type="protein sequence ID" value="AAD54439.1"/>
    <property type="molecule type" value="Genomic_DNA"/>
</dbReference>
<dbReference type="EMBL" id="AF084063">
    <property type="protein sequence ID" value="AAD54440.1"/>
    <property type="molecule type" value="Genomic_DNA"/>
</dbReference>
<dbReference type="SMR" id="Q9TDM3"/>
<dbReference type="GO" id="GO:0005743">
    <property type="term" value="C:mitochondrial inner membrane"/>
    <property type="evidence" value="ECO:0007669"/>
    <property type="project" value="UniProtKB-SubCell"/>
</dbReference>
<dbReference type="GO" id="GO:0045275">
    <property type="term" value="C:respiratory chain complex III"/>
    <property type="evidence" value="ECO:0007669"/>
    <property type="project" value="InterPro"/>
</dbReference>
<dbReference type="GO" id="GO:0046872">
    <property type="term" value="F:metal ion binding"/>
    <property type="evidence" value="ECO:0007669"/>
    <property type="project" value="UniProtKB-KW"/>
</dbReference>
<dbReference type="GO" id="GO:0008121">
    <property type="term" value="F:ubiquinol-cytochrome-c reductase activity"/>
    <property type="evidence" value="ECO:0007669"/>
    <property type="project" value="InterPro"/>
</dbReference>
<dbReference type="GO" id="GO:0006122">
    <property type="term" value="P:mitochondrial electron transport, ubiquinol to cytochrome c"/>
    <property type="evidence" value="ECO:0007669"/>
    <property type="project" value="TreeGrafter"/>
</dbReference>
<dbReference type="CDD" id="cd00290">
    <property type="entry name" value="cytochrome_b_C"/>
    <property type="match status" value="1"/>
</dbReference>
<dbReference type="CDD" id="cd00284">
    <property type="entry name" value="Cytochrome_b_N"/>
    <property type="match status" value="1"/>
</dbReference>
<dbReference type="FunFam" id="1.20.810.10:FF:000002">
    <property type="entry name" value="Cytochrome b"/>
    <property type="match status" value="1"/>
</dbReference>
<dbReference type="Gene3D" id="1.20.810.10">
    <property type="entry name" value="Cytochrome Bc1 Complex, Chain C"/>
    <property type="match status" value="1"/>
</dbReference>
<dbReference type="InterPro" id="IPR005798">
    <property type="entry name" value="Cyt_b/b6_C"/>
</dbReference>
<dbReference type="InterPro" id="IPR036150">
    <property type="entry name" value="Cyt_b/b6_C_sf"/>
</dbReference>
<dbReference type="InterPro" id="IPR005797">
    <property type="entry name" value="Cyt_b/b6_N"/>
</dbReference>
<dbReference type="InterPro" id="IPR027387">
    <property type="entry name" value="Cytb/b6-like_sf"/>
</dbReference>
<dbReference type="InterPro" id="IPR030689">
    <property type="entry name" value="Cytochrome_b"/>
</dbReference>
<dbReference type="InterPro" id="IPR048260">
    <property type="entry name" value="Cytochrome_b_C_euk/bac"/>
</dbReference>
<dbReference type="InterPro" id="IPR048259">
    <property type="entry name" value="Cytochrome_b_N_euk/bac"/>
</dbReference>
<dbReference type="InterPro" id="IPR016174">
    <property type="entry name" value="Di-haem_cyt_TM"/>
</dbReference>
<dbReference type="PANTHER" id="PTHR19271">
    <property type="entry name" value="CYTOCHROME B"/>
    <property type="match status" value="1"/>
</dbReference>
<dbReference type="PANTHER" id="PTHR19271:SF16">
    <property type="entry name" value="CYTOCHROME B"/>
    <property type="match status" value="1"/>
</dbReference>
<dbReference type="Pfam" id="PF00032">
    <property type="entry name" value="Cytochrom_B_C"/>
    <property type="match status" value="1"/>
</dbReference>
<dbReference type="Pfam" id="PF00033">
    <property type="entry name" value="Cytochrome_B"/>
    <property type="match status" value="1"/>
</dbReference>
<dbReference type="PIRSF" id="PIRSF038885">
    <property type="entry name" value="COB"/>
    <property type="match status" value="1"/>
</dbReference>
<dbReference type="SUPFAM" id="SSF81648">
    <property type="entry name" value="a domain/subunit of cytochrome bc1 complex (Ubiquinol-cytochrome c reductase)"/>
    <property type="match status" value="1"/>
</dbReference>
<dbReference type="SUPFAM" id="SSF81342">
    <property type="entry name" value="Transmembrane di-heme cytochromes"/>
    <property type="match status" value="1"/>
</dbReference>
<dbReference type="PROSITE" id="PS51003">
    <property type="entry name" value="CYTB_CTER"/>
    <property type="match status" value="1"/>
</dbReference>
<dbReference type="PROSITE" id="PS51002">
    <property type="entry name" value="CYTB_NTER"/>
    <property type="match status" value="1"/>
</dbReference>
<reference key="1">
    <citation type="journal article" date="1999" name="Mar. Mamm. Sci.">
        <title>Phylogenetic relationships among the delphinid cetaceans based on full cytochrome b sequences.</title>
        <authorList>
            <person name="LeDuc R.G."/>
            <person name="Perrin W.F."/>
            <person name="Dizon A.E."/>
        </authorList>
    </citation>
    <scope>NUCLEOTIDE SEQUENCE [GENOMIC DNA]</scope>
    <source>
        <strain>Isolate Australia</strain>
    </source>
</reference>
<gene>
    <name type="primary">MT-CYB</name>
    <name type="synonym">COB</name>
    <name type="synonym">CYTB</name>
    <name type="synonym">MTCYB</name>
</gene>
<accession>Q9TDM3</accession>
<accession>Q9TDM2</accession>
<feature type="chain" id="PRO_0000061320" description="Cytochrome b">
    <location>
        <begin position="1"/>
        <end position="379"/>
    </location>
</feature>
<feature type="transmembrane region" description="Helical" evidence="2">
    <location>
        <begin position="33"/>
        <end position="53"/>
    </location>
</feature>
<feature type="transmembrane region" description="Helical" evidence="2">
    <location>
        <begin position="77"/>
        <end position="98"/>
    </location>
</feature>
<feature type="transmembrane region" description="Helical" evidence="2">
    <location>
        <begin position="113"/>
        <end position="133"/>
    </location>
</feature>
<feature type="transmembrane region" description="Helical" evidence="2">
    <location>
        <begin position="178"/>
        <end position="198"/>
    </location>
</feature>
<feature type="transmembrane region" description="Helical" evidence="2">
    <location>
        <begin position="226"/>
        <end position="246"/>
    </location>
</feature>
<feature type="transmembrane region" description="Helical" evidence="2">
    <location>
        <begin position="288"/>
        <end position="308"/>
    </location>
</feature>
<feature type="transmembrane region" description="Helical" evidence="2">
    <location>
        <begin position="320"/>
        <end position="340"/>
    </location>
</feature>
<feature type="transmembrane region" description="Helical" evidence="2">
    <location>
        <begin position="347"/>
        <end position="367"/>
    </location>
</feature>
<feature type="binding site" description="axial binding residue" evidence="2">
    <location>
        <position position="83"/>
    </location>
    <ligand>
        <name>heme b</name>
        <dbReference type="ChEBI" id="CHEBI:60344"/>
        <label>b562</label>
    </ligand>
    <ligandPart>
        <name>Fe</name>
        <dbReference type="ChEBI" id="CHEBI:18248"/>
    </ligandPart>
</feature>
<feature type="binding site" description="axial binding residue" evidence="2">
    <location>
        <position position="97"/>
    </location>
    <ligand>
        <name>heme b</name>
        <dbReference type="ChEBI" id="CHEBI:60344"/>
        <label>b566</label>
    </ligand>
    <ligandPart>
        <name>Fe</name>
        <dbReference type="ChEBI" id="CHEBI:18248"/>
    </ligandPart>
</feature>
<feature type="binding site" description="axial binding residue" evidence="2">
    <location>
        <position position="182"/>
    </location>
    <ligand>
        <name>heme b</name>
        <dbReference type="ChEBI" id="CHEBI:60344"/>
        <label>b562</label>
    </ligand>
    <ligandPart>
        <name>Fe</name>
        <dbReference type="ChEBI" id="CHEBI:18248"/>
    </ligandPart>
</feature>
<feature type="binding site" description="axial binding residue" evidence="2">
    <location>
        <position position="196"/>
    </location>
    <ligand>
        <name>heme b</name>
        <dbReference type="ChEBI" id="CHEBI:60344"/>
        <label>b566</label>
    </ligand>
    <ligandPart>
        <name>Fe</name>
        <dbReference type="ChEBI" id="CHEBI:18248"/>
    </ligandPart>
</feature>
<feature type="binding site" evidence="2">
    <location>
        <position position="201"/>
    </location>
    <ligand>
        <name>a ubiquinone</name>
        <dbReference type="ChEBI" id="CHEBI:16389"/>
    </ligand>
</feature>
<feature type="sequence variant" description="In strain: Isolate Australia.">
    <original>D</original>
    <variation>N</variation>
    <location>
        <position position="16"/>
    </location>
</feature>
<feature type="sequence variant" description="In strain: Isolate Australia.">
    <original>N</original>
    <variation>S</variation>
    <location>
        <position position="26"/>
    </location>
</feature>
<feature type="sequence variant" description="In strain: Isolate Australia.">
    <original>T</original>
    <variation>M</variation>
    <location>
        <position position="43"/>
    </location>
</feature>
<feature type="sequence variant" description="In strain: Isolate Australia.">
    <original>I</original>
    <variation>T</variation>
    <location>
        <position position="194"/>
    </location>
</feature>
<feature type="sequence variant" description="In strain: Isolate Australia.">
    <original>S</original>
    <variation>G</variation>
    <location>
        <position position="340"/>
    </location>
</feature>
<name>CYB_ORCBR</name>
<keyword id="KW-0249">Electron transport</keyword>
<keyword id="KW-0349">Heme</keyword>
<keyword id="KW-0408">Iron</keyword>
<keyword id="KW-0472">Membrane</keyword>
<keyword id="KW-0479">Metal-binding</keyword>
<keyword id="KW-0496">Mitochondrion</keyword>
<keyword id="KW-0999">Mitochondrion inner membrane</keyword>
<keyword id="KW-0679">Respiratory chain</keyword>
<keyword id="KW-0812">Transmembrane</keyword>
<keyword id="KW-1133">Transmembrane helix</keyword>
<keyword id="KW-0813">Transport</keyword>
<keyword id="KW-0830">Ubiquinone</keyword>
<sequence length="379" mass="42876">MTNIRKTHPLMKILNDAFIDLPTPSNISSWWNFGSLLGLCLITQILTGLFLAMHYTPDTSTAFSSVAHICRDVNYGWFIRYLHANGASMFFICLYAHIGRGLYYGSYMFQETWNIGVLLLLTVMATAFVGYVLPWGQMSFWGATVITNLLSAIPYIGTTLVEWIWGGFSVDKATLTRFFAFHFILPFIITALVIVHLLFLHETGSNNPTGIPSNMDMIPFHPYHTFKDILGALLLILVLLTLTLFTPDLLGDPDNYTPANPLSTPAHIKPEWYFLFAYAILRSIPNKLGGVLALLLSILILIFIPMLQTSKQRSMMFRPFSQLLFWTLIADLLTLTWIGSQPVEHPYIIVGQLASILYFLLILVLMPTVSLIENKLLKW</sequence>
<protein>
    <recommendedName>
        <fullName>Cytochrome b</fullName>
    </recommendedName>
    <alternativeName>
        <fullName>Complex III subunit 3</fullName>
    </alternativeName>
    <alternativeName>
        <fullName>Complex III subunit III</fullName>
    </alternativeName>
    <alternativeName>
        <fullName>Cytochrome b-c1 complex subunit 3</fullName>
    </alternativeName>
    <alternativeName>
        <fullName>Ubiquinol-cytochrome-c reductase complex cytochrome b subunit</fullName>
    </alternativeName>
</protein>